<reference key="1">
    <citation type="journal article" date="2008" name="J. Bacteriol.">
        <title>Genome sequence of Staphylococcus aureus strain Newman and comparative analysis of staphylococcal genomes: polymorphism and evolution of two major pathogenicity islands.</title>
        <authorList>
            <person name="Baba T."/>
            <person name="Bae T."/>
            <person name="Schneewind O."/>
            <person name="Takeuchi F."/>
            <person name="Hiramatsu K."/>
        </authorList>
    </citation>
    <scope>NUCLEOTIDE SEQUENCE [LARGE SCALE GENOMIC DNA]</scope>
    <source>
        <strain>Newman</strain>
    </source>
</reference>
<organism>
    <name type="scientific">Staphylococcus aureus (strain Newman)</name>
    <dbReference type="NCBI Taxonomy" id="426430"/>
    <lineage>
        <taxon>Bacteria</taxon>
        <taxon>Bacillati</taxon>
        <taxon>Bacillota</taxon>
        <taxon>Bacilli</taxon>
        <taxon>Bacillales</taxon>
        <taxon>Staphylococcaceae</taxon>
        <taxon>Staphylococcus</taxon>
    </lineage>
</organism>
<evidence type="ECO:0000255" key="1">
    <source>
        <dbReference type="HAMAP-Rule" id="MF_01341"/>
    </source>
</evidence>
<evidence type="ECO:0000256" key="2">
    <source>
        <dbReference type="SAM" id="MobiDB-lite"/>
    </source>
</evidence>
<evidence type="ECO:0000305" key="3"/>
<keyword id="KW-0687">Ribonucleoprotein</keyword>
<keyword id="KW-0689">Ribosomal protein</keyword>
<keyword id="KW-0694">RNA-binding</keyword>
<keyword id="KW-0699">rRNA-binding</keyword>
<name>RL15_STAAE</name>
<proteinExistence type="inferred from homology"/>
<gene>
    <name evidence="1" type="primary">rplO</name>
    <name type="ordered locus">NWMN_2133</name>
</gene>
<protein>
    <recommendedName>
        <fullName evidence="1">Large ribosomal subunit protein uL15</fullName>
    </recommendedName>
    <alternativeName>
        <fullName evidence="3">50S ribosomal protein L15</fullName>
    </alternativeName>
</protein>
<dbReference type="EMBL" id="AP009351">
    <property type="protein sequence ID" value="BAF68405.1"/>
    <property type="molecule type" value="Genomic_DNA"/>
</dbReference>
<dbReference type="RefSeq" id="WP_000766074.1">
    <property type="nucleotide sequence ID" value="NZ_JBBIAE010000006.1"/>
</dbReference>
<dbReference type="SMR" id="A6QJ73"/>
<dbReference type="GeneID" id="98346543"/>
<dbReference type="KEGG" id="sae:NWMN_2133"/>
<dbReference type="HOGENOM" id="CLU_055188_4_2_9"/>
<dbReference type="Proteomes" id="UP000006386">
    <property type="component" value="Chromosome"/>
</dbReference>
<dbReference type="GO" id="GO:0022625">
    <property type="term" value="C:cytosolic large ribosomal subunit"/>
    <property type="evidence" value="ECO:0007669"/>
    <property type="project" value="TreeGrafter"/>
</dbReference>
<dbReference type="GO" id="GO:0019843">
    <property type="term" value="F:rRNA binding"/>
    <property type="evidence" value="ECO:0007669"/>
    <property type="project" value="UniProtKB-UniRule"/>
</dbReference>
<dbReference type="GO" id="GO:0003735">
    <property type="term" value="F:structural constituent of ribosome"/>
    <property type="evidence" value="ECO:0007669"/>
    <property type="project" value="InterPro"/>
</dbReference>
<dbReference type="GO" id="GO:0006412">
    <property type="term" value="P:translation"/>
    <property type="evidence" value="ECO:0007669"/>
    <property type="project" value="UniProtKB-UniRule"/>
</dbReference>
<dbReference type="FunFam" id="3.100.10.10:FF:000004">
    <property type="entry name" value="50S ribosomal protein L15"/>
    <property type="match status" value="1"/>
</dbReference>
<dbReference type="Gene3D" id="3.100.10.10">
    <property type="match status" value="1"/>
</dbReference>
<dbReference type="HAMAP" id="MF_01341">
    <property type="entry name" value="Ribosomal_uL15"/>
    <property type="match status" value="1"/>
</dbReference>
<dbReference type="InterPro" id="IPR030878">
    <property type="entry name" value="Ribosomal_uL15"/>
</dbReference>
<dbReference type="InterPro" id="IPR021131">
    <property type="entry name" value="Ribosomal_uL15/eL18"/>
</dbReference>
<dbReference type="InterPro" id="IPR036227">
    <property type="entry name" value="Ribosomal_uL15/eL18_sf"/>
</dbReference>
<dbReference type="InterPro" id="IPR005749">
    <property type="entry name" value="Ribosomal_uL15_bac-type"/>
</dbReference>
<dbReference type="InterPro" id="IPR001196">
    <property type="entry name" value="Ribosomal_uL15_CS"/>
</dbReference>
<dbReference type="NCBIfam" id="TIGR01071">
    <property type="entry name" value="rplO_bact"/>
    <property type="match status" value="1"/>
</dbReference>
<dbReference type="PANTHER" id="PTHR12934">
    <property type="entry name" value="50S RIBOSOMAL PROTEIN L15"/>
    <property type="match status" value="1"/>
</dbReference>
<dbReference type="PANTHER" id="PTHR12934:SF11">
    <property type="entry name" value="LARGE RIBOSOMAL SUBUNIT PROTEIN UL15M"/>
    <property type="match status" value="1"/>
</dbReference>
<dbReference type="Pfam" id="PF00828">
    <property type="entry name" value="Ribosomal_L27A"/>
    <property type="match status" value="1"/>
</dbReference>
<dbReference type="SUPFAM" id="SSF52080">
    <property type="entry name" value="Ribosomal proteins L15p and L18e"/>
    <property type="match status" value="1"/>
</dbReference>
<dbReference type="PROSITE" id="PS00475">
    <property type="entry name" value="RIBOSOMAL_L15"/>
    <property type="match status" value="1"/>
</dbReference>
<sequence length="146" mass="15597">MKLHELKPAEGSRKERNRVGRGVATGNGKTSGRGHKGQKARSGGGVRPGFEGGQLPLFRRLPKRGFTNINRKEYAIVNLDQLNKFEDGTEVTPALLVESGVVKNEKSGIKILGNGSLDKKLTVKAHKFSASAAEAIDAKGGAHEVI</sequence>
<accession>A6QJ73</accession>
<comment type="function">
    <text evidence="1">Binds to the 23S rRNA.</text>
</comment>
<comment type="subunit">
    <text evidence="1">Part of the 50S ribosomal subunit.</text>
</comment>
<comment type="similarity">
    <text evidence="1">Belongs to the universal ribosomal protein uL15 family.</text>
</comment>
<feature type="chain" id="PRO_1000073317" description="Large ribosomal subunit protein uL15">
    <location>
        <begin position="1"/>
        <end position="146"/>
    </location>
</feature>
<feature type="region of interest" description="Disordered" evidence="2">
    <location>
        <begin position="1"/>
        <end position="54"/>
    </location>
</feature>
<feature type="compositionally biased region" description="Basic and acidic residues" evidence="2">
    <location>
        <begin position="1"/>
        <end position="18"/>
    </location>
</feature>
<feature type="compositionally biased region" description="Gly residues" evidence="2">
    <location>
        <begin position="42"/>
        <end position="52"/>
    </location>
</feature>